<reference key="1">
    <citation type="journal article" date="2001" name="Proc. Natl. Acad. Sci. U.S.A.">
        <title>Genome sequence of an industrial microorganism Streptomyces avermitilis: deducing the ability of producing secondary metabolites.</title>
        <authorList>
            <person name="Omura S."/>
            <person name="Ikeda H."/>
            <person name="Ishikawa J."/>
            <person name="Hanamoto A."/>
            <person name="Takahashi C."/>
            <person name="Shinose M."/>
            <person name="Takahashi Y."/>
            <person name="Horikawa H."/>
            <person name="Nakazawa H."/>
            <person name="Osonoe T."/>
            <person name="Kikuchi H."/>
            <person name="Shiba T."/>
            <person name="Sakaki Y."/>
            <person name="Hattori M."/>
        </authorList>
    </citation>
    <scope>NUCLEOTIDE SEQUENCE [LARGE SCALE GENOMIC DNA]</scope>
    <source>
        <strain>ATCC 31267 / DSM 46492 / JCM 5070 / NBRC 14893 / NCIMB 12804 / NRRL 8165 / MA-4680</strain>
    </source>
</reference>
<reference key="2">
    <citation type="journal article" date="2003" name="Nat. Biotechnol.">
        <title>Complete genome sequence and comparative analysis of the industrial microorganism Streptomyces avermitilis.</title>
        <authorList>
            <person name="Ikeda H."/>
            <person name="Ishikawa J."/>
            <person name="Hanamoto A."/>
            <person name="Shinose M."/>
            <person name="Kikuchi H."/>
            <person name="Shiba T."/>
            <person name="Sakaki Y."/>
            <person name="Hattori M."/>
            <person name="Omura S."/>
        </authorList>
    </citation>
    <scope>NUCLEOTIDE SEQUENCE [LARGE SCALE GENOMIC DNA]</scope>
    <source>
        <strain>ATCC 31267 / DSM 46492 / JCM 5070 / NBRC 14893 / NCIMB 12804 / NRRL 8165 / MA-4680</strain>
    </source>
</reference>
<organism>
    <name type="scientific">Streptomyces avermitilis (strain ATCC 31267 / DSM 46492 / JCM 5070 / NBRC 14893 / NCIMB 12804 / NRRL 8165 / MA-4680)</name>
    <dbReference type="NCBI Taxonomy" id="227882"/>
    <lineage>
        <taxon>Bacteria</taxon>
        <taxon>Bacillati</taxon>
        <taxon>Actinomycetota</taxon>
        <taxon>Actinomycetes</taxon>
        <taxon>Kitasatosporales</taxon>
        <taxon>Streptomycetaceae</taxon>
        <taxon>Streptomyces</taxon>
    </lineage>
</organism>
<dbReference type="EMBL" id="BA000030">
    <property type="protein sequence ID" value="BAC73161.1"/>
    <property type="molecule type" value="Genomic_DNA"/>
</dbReference>
<dbReference type="RefSeq" id="WP_010986851.1">
    <property type="nucleotide sequence ID" value="NZ_JZJK01000066.1"/>
</dbReference>
<dbReference type="SMR" id="Q820F8"/>
<dbReference type="GeneID" id="41542541"/>
<dbReference type="KEGG" id="sma:SAVERM_5449"/>
<dbReference type="eggNOG" id="COG1219">
    <property type="taxonomic scope" value="Bacteria"/>
</dbReference>
<dbReference type="HOGENOM" id="CLU_014218_8_2_11"/>
<dbReference type="OrthoDB" id="9804062at2"/>
<dbReference type="Proteomes" id="UP000000428">
    <property type="component" value="Chromosome"/>
</dbReference>
<dbReference type="GO" id="GO:0009376">
    <property type="term" value="C:HslUV protease complex"/>
    <property type="evidence" value="ECO:0007669"/>
    <property type="project" value="TreeGrafter"/>
</dbReference>
<dbReference type="GO" id="GO:0005524">
    <property type="term" value="F:ATP binding"/>
    <property type="evidence" value="ECO:0007669"/>
    <property type="project" value="UniProtKB-UniRule"/>
</dbReference>
<dbReference type="GO" id="GO:0016887">
    <property type="term" value="F:ATP hydrolysis activity"/>
    <property type="evidence" value="ECO:0007669"/>
    <property type="project" value="InterPro"/>
</dbReference>
<dbReference type="GO" id="GO:0140662">
    <property type="term" value="F:ATP-dependent protein folding chaperone"/>
    <property type="evidence" value="ECO:0007669"/>
    <property type="project" value="InterPro"/>
</dbReference>
<dbReference type="GO" id="GO:0046983">
    <property type="term" value="F:protein dimerization activity"/>
    <property type="evidence" value="ECO:0007669"/>
    <property type="project" value="InterPro"/>
</dbReference>
<dbReference type="GO" id="GO:0051082">
    <property type="term" value="F:unfolded protein binding"/>
    <property type="evidence" value="ECO:0007669"/>
    <property type="project" value="UniProtKB-UniRule"/>
</dbReference>
<dbReference type="GO" id="GO:0008270">
    <property type="term" value="F:zinc ion binding"/>
    <property type="evidence" value="ECO:0007669"/>
    <property type="project" value="InterPro"/>
</dbReference>
<dbReference type="GO" id="GO:0051301">
    <property type="term" value="P:cell division"/>
    <property type="evidence" value="ECO:0007669"/>
    <property type="project" value="TreeGrafter"/>
</dbReference>
<dbReference type="GO" id="GO:0051603">
    <property type="term" value="P:proteolysis involved in protein catabolic process"/>
    <property type="evidence" value="ECO:0007669"/>
    <property type="project" value="TreeGrafter"/>
</dbReference>
<dbReference type="CDD" id="cd19497">
    <property type="entry name" value="RecA-like_ClpX"/>
    <property type="match status" value="1"/>
</dbReference>
<dbReference type="FunFam" id="1.10.8.60:FF:000002">
    <property type="entry name" value="ATP-dependent Clp protease ATP-binding subunit ClpX"/>
    <property type="match status" value="1"/>
</dbReference>
<dbReference type="FunFam" id="3.40.50.300:FF:000005">
    <property type="entry name" value="ATP-dependent Clp protease ATP-binding subunit ClpX"/>
    <property type="match status" value="1"/>
</dbReference>
<dbReference type="Gene3D" id="1.10.8.60">
    <property type="match status" value="1"/>
</dbReference>
<dbReference type="Gene3D" id="6.20.220.10">
    <property type="entry name" value="ClpX chaperone, C4-type zinc finger domain"/>
    <property type="match status" value="1"/>
</dbReference>
<dbReference type="Gene3D" id="3.40.50.300">
    <property type="entry name" value="P-loop containing nucleotide triphosphate hydrolases"/>
    <property type="match status" value="1"/>
</dbReference>
<dbReference type="HAMAP" id="MF_00175">
    <property type="entry name" value="ClpX"/>
    <property type="match status" value="1"/>
</dbReference>
<dbReference type="InterPro" id="IPR003593">
    <property type="entry name" value="AAA+_ATPase"/>
</dbReference>
<dbReference type="InterPro" id="IPR050052">
    <property type="entry name" value="ATP-dep_Clp_protease_ClpX"/>
</dbReference>
<dbReference type="InterPro" id="IPR003959">
    <property type="entry name" value="ATPase_AAA_core"/>
</dbReference>
<dbReference type="InterPro" id="IPR019489">
    <property type="entry name" value="Clp_ATPase_C"/>
</dbReference>
<dbReference type="InterPro" id="IPR004487">
    <property type="entry name" value="Clp_protease_ATP-bd_su_ClpX"/>
</dbReference>
<dbReference type="InterPro" id="IPR046425">
    <property type="entry name" value="ClpX_bact"/>
</dbReference>
<dbReference type="InterPro" id="IPR027417">
    <property type="entry name" value="P-loop_NTPase"/>
</dbReference>
<dbReference type="InterPro" id="IPR010603">
    <property type="entry name" value="Znf_CppX_C4"/>
</dbReference>
<dbReference type="InterPro" id="IPR038366">
    <property type="entry name" value="Znf_CppX_C4_sf"/>
</dbReference>
<dbReference type="NCBIfam" id="TIGR00382">
    <property type="entry name" value="clpX"/>
    <property type="match status" value="1"/>
</dbReference>
<dbReference type="NCBIfam" id="NF003745">
    <property type="entry name" value="PRK05342.1"/>
    <property type="match status" value="1"/>
</dbReference>
<dbReference type="PANTHER" id="PTHR48102:SF7">
    <property type="entry name" value="ATP-DEPENDENT CLP PROTEASE ATP-BINDING SUBUNIT CLPX-LIKE, MITOCHONDRIAL"/>
    <property type="match status" value="1"/>
</dbReference>
<dbReference type="PANTHER" id="PTHR48102">
    <property type="entry name" value="ATP-DEPENDENT CLP PROTEASE ATP-BINDING SUBUNIT CLPX-LIKE, MITOCHONDRIAL-RELATED"/>
    <property type="match status" value="1"/>
</dbReference>
<dbReference type="Pfam" id="PF07724">
    <property type="entry name" value="AAA_2"/>
    <property type="match status" value="1"/>
</dbReference>
<dbReference type="Pfam" id="PF10431">
    <property type="entry name" value="ClpB_D2-small"/>
    <property type="match status" value="1"/>
</dbReference>
<dbReference type="Pfam" id="PF06689">
    <property type="entry name" value="zf-C4_ClpX"/>
    <property type="match status" value="1"/>
</dbReference>
<dbReference type="SMART" id="SM00382">
    <property type="entry name" value="AAA"/>
    <property type="match status" value="1"/>
</dbReference>
<dbReference type="SMART" id="SM01086">
    <property type="entry name" value="ClpB_D2-small"/>
    <property type="match status" value="1"/>
</dbReference>
<dbReference type="SMART" id="SM00994">
    <property type="entry name" value="zf-C4_ClpX"/>
    <property type="match status" value="1"/>
</dbReference>
<dbReference type="SUPFAM" id="SSF57716">
    <property type="entry name" value="Glucocorticoid receptor-like (DNA-binding domain)"/>
    <property type="match status" value="1"/>
</dbReference>
<dbReference type="SUPFAM" id="SSF52540">
    <property type="entry name" value="P-loop containing nucleoside triphosphate hydrolases"/>
    <property type="match status" value="1"/>
</dbReference>
<dbReference type="PROSITE" id="PS51902">
    <property type="entry name" value="CLPX_ZB"/>
    <property type="match status" value="1"/>
</dbReference>
<evidence type="ECO:0000255" key="1">
    <source>
        <dbReference type="HAMAP-Rule" id="MF_00175"/>
    </source>
</evidence>
<evidence type="ECO:0000255" key="2">
    <source>
        <dbReference type="PROSITE-ProRule" id="PRU01250"/>
    </source>
</evidence>
<comment type="function">
    <text evidence="1">ATP-dependent specificity component of the Clp protease. It directs the protease to specific substrates. Can perform chaperone functions in the absence of ClpP.</text>
</comment>
<comment type="subunit">
    <text evidence="1">Component of the ClpX-ClpP complex. Forms a hexameric ring that, in the presence of ATP, binds to fourteen ClpP subunits assembled into a disk-like structure with a central cavity, resembling the structure of eukaryotic proteasomes.</text>
</comment>
<comment type="similarity">
    <text evidence="1">Belongs to the ClpX chaperone family.</text>
</comment>
<name>CLPX_STRAW</name>
<accession>Q820F8</accession>
<gene>
    <name evidence="1" type="primary">clpX</name>
    <name type="ordered locus">SAV_5449</name>
</gene>
<protein>
    <recommendedName>
        <fullName evidence="1">ATP-dependent Clp protease ATP-binding subunit ClpX</fullName>
    </recommendedName>
</protein>
<feature type="chain" id="PRO_0000160429" description="ATP-dependent Clp protease ATP-binding subunit ClpX">
    <location>
        <begin position="1"/>
        <end position="428"/>
    </location>
</feature>
<feature type="domain" description="ClpX-type ZB" evidence="2">
    <location>
        <begin position="1"/>
        <end position="54"/>
    </location>
</feature>
<feature type="binding site" evidence="2">
    <location>
        <position position="13"/>
    </location>
    <ligand>
        <name>Zn(2+)</name>
        <dbReference type="ChEBI" id="CHEBI:29105"/>
    </ligand>
</feature>
<feature type="binding site" evidence="2">
    <location>
        <position position="16"/>
    </location>
    <ligand>
        <name>Zn(2+)</name>
        <dbReference type="ChEBI" id="CHEBI:29105"/>
    </ligand>
</feature>
<feature type="binding site" evidence="2">
    <location>
        <position position="35"/>
    </location>
    <ligand>
        <name>Zn(2+)</name>
        <dbReference type="ChEBI" id="CHEBI:29105"/>
    </ligand>
</feature>
<feature type="binding site" evidence="2">
    <location>
        <position position="38"/>
    </location>
    <ligand>
        <name>Zn(2+)</name>
        <dbReference type="ChEBI" id="CHEBI:29105"/>
    </ligand>
</feature>
<feature type="binding site" evidence="1">
    <location>
        <begin position="123"/>
        <end position="130"/>
    </location>
    <ligand>
        <name>ATP</name>
        <dbReference type="ChEBI" id="CHEBI:30616"/>
    </ligand>
</feature>
<proteinExistence type="inferred from homology"/>
<keyword id="KW-0067">ATP-binding</keyword>
<keyword id="KW-0143">Chaperone</keyword>
<keyword id="KW-0479">Metal-binding</keyword>
<keyword id="KW-0547">Nucleotide-binding</keyword>
<keyword id="KW-1185">Reference proteome</keyword>
<keyword id="KW-0862">Zinc</keyword>
<sequence length="428" mass="46869">MARIGDGGDLLKCSFCGKSQKQVKKLIAGPGVYICDECIDLCNEIIEEELAETSEVRWEELPKPREIYEFLEGYVVGQEAAKKALSVAVYNHYKRVQAGENGGGQSREDAIELAKSNILLLGPTGSGKTLLAQTLARMLNVPFAIADATALTEAGYVGEDVENILLKLIQAADYDVKKAETGIIYIDEIDKVARKSENPSITRDVSGEGVQQALLKILEGTTASVPPQGGRKHPHQEFIQIDTTNVLFIVGGAFAGLEKLIESRAGAKGIGFGATIRSKRELESKDQFEDVMPEDLVKFGMIPEFIGRLPVITSVHNLDREALLQILVEPRNALVKQYQRLFELDGVELDFEREALEAIADQAILRQTGARGLRAIMEEVLMSVMYEVPSRKDVARVVITADVVHSNVNPTLIPRDARGRGPGEQKTA</sequence>